<organism evidence="3">
    <name type="scientific">Bacteroides stercoris</name>
    <dbReference type="NCBI Taxonomy" id="46506"/>
    <lineage>
        <taxon>Bacteria</taxon>
        <taxon>Pseudomonadati</taxon>
        <taxon>Bacteroidota</taxon>
        <taxon>Bacteroidia</taxon>
        <taxon>Bacteroidales</taxon>
        <taxon>Bacteroidaceae</taxon>
        <taxon>Bacteroides</taxon>
    </lineage>
</organism>
<accession>P83147</accession>
<feature type="chain" id="PRO_0000064701" description="Acharan sulfate lyase 2">
    <location>
        <begin position="1" status="less than"/>
        <end position="11" status="greater than"/>
    </location>
</feature>
<feature type="non-terminal residue" evidence="2">
    <location>
        <position position="1"/>
    </location>
</feature>
<feature type="non-terminal residue" evidence="2">
    <location>
        <position position="11"/>
    </location>
</feature>
<proteinExistence type="evidence at protein level"/>
<protein>
    <recommendedName>
        <fullName>Acharan sulfate lyase 2</fullName>
        <ecNumber>4.2.2.-</ecNumber>
    </recommendedName>
</protein>
<keyword id="KW-0903">Direct protein sequencing</keyword>
<keyword id="KW-0358">Heparin-binding</keyword>
<keyword id="KW-0456">Lyase</keyword>
<dbReference type="EC" id="4.2.2.-"/>
<dbReference type="GO" id="GO:0008201">
    <property type="term" value="F:heparin binding"/>
    <property type="evidence" value="ECO:0000314"/>
    <property type="project" value="UniProtKB"/>
</dbReference>
<dbReference type="GO" id="GO:0016829">
    <property type="term" value="F:lyase activity"/>
    <property type="evidence" value="ECO:0000314"/>
    <property type="project" value="UniProtKB"/>
</dbReference>
<reference evidence="3" key="1">
    <citation type="journal article" date="2001" name="Eur. J. Biochem.">
        <title>Purification and characterization of acharan sulfate lyases, two novel heparinases, from Bacteroides stercoris HJ-15.</title>
        <authorList>
            <person name="Kim B.-T."/>
            <person name="Hong S.-W."/>
            <person name="Kim W.-S."/>
            <person name="Kim Y.S."/>
            <person name="Kim D.-H."/>
        </authorList>
    </citation>
    <scope>PROTEIN SEQUENCE</scope>
    <scope>FUNCTION</scope>
    <scope>ACTIVITY REGULATION</scope>
    <scope>SUBUNIT</scope>
    <source>
        <strain>HJ-15</strain>
    </source>
</reference>
<comment type="function">
    <text evidence="1">Degrades acharan sulfate and, to a lesser extent, heparin and heparan sulfate.</text>
</comment>
<comment type="activity regulation">
    <text evidence="1">Inhibited by Cu(2+) ion, nitrogen and lead. Activated by reducing agents, such as DL-dithiothreitol and 2-mercaptoethanol.</text>
</comment>
<comment type="biophysicochemical properties">
    <phDependence>
        <text>Optimum pH is 7.2.</text>
    </phDependence>
    <temperatureDependence>
        <text>Optimum temperature 45 degrees Celsius.</text>
    </temperatureDependence>
</comment>
<comment type="subunit">
    <text evidence="1">Monomer.</text>
</comment>
<comment type="PTM">
    <text evidence="1">The N-terminus is blocked.</text>
</comment>
<evidence type="ECO:0000269" key="1">
    <source>
    </source>
</evidence>
<evidence type="ECO:0000303" key="2">
    <source>
    </source>
</evidence>
<evidence type="ECO:0000305" key="3"/>
<name>ASL2_BACSE</name>
<sequence length="11" mass="1195">TEFATNDGGQR</sequence>